<accession>Q630Y3</accession>
<protein>
    <recommendedName>
        <fullName evidence="1">Teichoic acids export ATP-binding protein TagH</fullName>
        <ecNumber evidence="1">7.5.2.4</ecNumber>
    </recommendedName>
</protein>
<proteinExistence type="inferred from homology"/>
<evidence type="ECO:0000255" key="1">
    <source>
        <dbReference type="HAMAP-Rule" id="MF_01715"/>
    </source>
</evidence>
<evidence type="ECO:0000255" key="2">
    <source>
        <dbReference type="PROSITE-ProRule" id="PRU01117"/>
    </source>
</evidence>
<sequence length="549" mass="61901">MNYTVKFQNVTKKYKMYNKPSDKLKDLFRKQEDGVFHYALSNVSFEVPKGEIVGIIGLNGSGKSTLSNLIAGVTMPNKGKIDIKGSAALIAISSGLNGQLSGIENIELKGLMMGLTKEKVKEIIPQIIEFADIGKFINQPVKTYSSGMKARLGFAISVNINPDVLVIDEALSVGDQTFTNKCLKKMNEFKEKGKTIFFISHSLNQVNSFCTKAIWLYYGQVREYGDVNDVVANYRAFLKEYNQMSMEDRKKFQEEQVLQFQHGLLQDYAKETLTNPRRLKGERRKYKKKNRVILGISLALMAGIISVGVYYKDIFPIKQDTQHVKQAVQGEDTNEAKQDKRQRVEENMYMVKSNGINIRKEASASSEKLAVANFGDIITIFDDNKSKEKDAEWIQVSLSKGEIGWVSTKFIEPFKSNDSIIEDAKLADITALLKRVYGENMASAPTYFGKTLNELKATYPQPLNPLPSMAGKTIVKDGNIQFGILQDKVVEVVFQDISMSIAKLHELLGKESLSNDVEKNYFYETKSYYIAARSDQTHREIQSISIVKK</sequence>
<keyword id="KW-0067">ATP-binding</keyword>
<keyword id="KW-1003">Cell membrane</keyword>
<keyword id="KW-0472">Membrane</keyword>
<keyword id="KW-0547">Nucleotide-binding</keyword>
<keyword id="KW-1278">Translocase</keyword>
<keyword id="KW-0813">Transport</keyword>
<feature type="chain" id="PRO_0000092985" description="Teichoic acids export ATP-binding protein TagH">
    <location>
        <begin position="1"/>
        <end position="549"/>
    </location>
</feature>
<feature type="domain" description="ABC transporter" evidence="1">
    <location>
        <begin position="22"/>
        <end position="243"/>
    </location>
</feature>
<feature type="domain" description="SH3b" evidence="2">
    <location>
        <begin position="346"/>
        <end position="415"/>
    </location>
</feature>
<feature type="region of interest" description="Unknown">
    <location>
        <begin position="244"/>
        <end position="549"/>
    </location>
</feature>
<feature type="binding site" evidence="1">
    <location>
        <begin position="57"/>
        <end position="64"/>
    </location>
    <ligand>
        <name>ATP</name>
        <dbReference type="ChEBI" id="CHEBI:30616"/>
    </ligand>
</feature>
<dbReference type="EC" id="7.5.2.4" evidence="1"/>
<dbReference type="EMBL" id="CP000001">
    <property type="protein sequence ID" value="AAU15315.1"/>
    <property type="molecule type" value="Genomic_DNA"/>
</dbReference>
<dbReference type="RefSeq" id="WP_001110158.1">
    <property type="nucleotide sequence ID" value="NC_006274.1"/>
</dbReference>
<dbReference type="SMR" id="Q630Y3"/>
<dbReference type="KEGG" id="bcz:BCE33L4965"/>
<dbReference type="PATRIC" id="fig|288681.22.peg.384"/>
<dbReference type="Proteomes" id="UP000002612">
    <property type="component" value="Chromosome"/>
</dbReference>
<dbReference type="GO" id="GO:0005886">
    <property type="term" value="C:plasma membrane"/>
    <property type="evidence" value="ECO:0007669"/>
    <property type="project" value="UniProtKB-SubCell"/>
</dbReference>
<dbReference type="GO" id="GO:0015438">
    <property type="term" value="F:ABC-type teichoic acid transporter activity"/>
    <property type="evidence" value="ECO:0007669"/>
    <property type="project" value="UniProtKB-EC"/>
</dbReference>
<dbReference type="GO" id="GO:0005524">
    <property type="term" value="F:ATP binding"/>
    <property type="evidence" value="ECO:0007669"/>
    <property type="project" value="UniProtKB-KW"/>
</dbReference>
<dbReference type="GO" id="GO:0016887">
    <property type="term" value="F:ATP hydrolysis activity"/>
    <property type="evidence" value="ECO:0007669"/>
    <property type="project" value="InterPro"/>
</dbReference>
<dbReference type="CDD" id="cd03220">
    <property type="entry name" value="ABC_KpsT_Wzt"/>
    <property type="match status" value="1"/>
</dbReference>
<dbReference type="FunFam" id="3.40.50.300:FF:003010">
    <property type="entry name" value="Teichoic acids export ATP-binding protein TagH"/>
    <property type="match status" value="1"/>
</dbReference>
<dbReference type="Gene3D" id="3.40.50.300">
    <property type="entry name" value="P-loop containing nucleotide triphosphate hydrolases"/>
    <property type="match status" value="1"/>
</dbReference>
<dbReference type="Gene3D" id="2.30.30.40">
    <property type="entry name" value="SH3 Domains"/>
    <property type="match status" value="1"/>
</dbReference>
<dbReference type="InterPro" id="IPR003593">
    <property type="entry name" value="AAA+_ATPase"/>
</dbReference>
<dbReference type="InterPro" id="IPR003439">
    <property type="entry name" value="ABC_transporter-like_ATP-bd"/>
</dbReference>
<dbReference type="InterPro" id="IPR017871">
    <property type="entry name" value="ABC_transporter-like_CS"/>
</dbReference>
<dbReference type="InterPro" id="IPR015860">
    <property type="entry name" value="ABC_transpr_TagH-like"/>
</dbReference>
<dbReference type="InterPro" id="IPR050683">
    <property type="entry name" value="Bact_Polysacc_Export_ATP-bd"/>
</dbReference>
<dbReference type="InterPro" id="IPR027417">
    <property type="entry name" value="P-loop_NTPase"/>
</dbReference>
<dbReference type="InterPro" id="IPR003646">
    <property type="entry name" value="SH3-like_bac-type"/>
</dbReference>
<dbReference type="NCBIfam" id="NF010065">
    <property type="entry name" value="PRK13545.1"/>
    <property type="match status" value="1"/>
</dbReference>
<dbReference type="NCBIfam" id="NF010066">
    <property type="entry name" value="PRK13546.1"/>
    <property type="match status" value="1"/>
</dbReference>
<dbReference type="PANTHER" id="PTHR46743">
    <property type="entry name" value="TEICHOIC ACIDS EXPORT ATP-BINDING PROTEIN TAGH"/>
    <property type="match status" value="1"/>
</dbReference>
<dbReference type="PANTHER" id="PTHR46743:SF2">
    <property type="entry name" value="TEICHOIC ACIDS EXPORT ATP-BINDING PROTEIN TAGH"/>
    <property type="match status" value="1"/>
</dbReference>
<dbReference type="Pfam" id="PF00005">
    <property type="entry name" value="ABC_tran"/>
    <property type="match status" value="1"/>
</dbReference>
<dbReference type="Pfam" id="PF08239">
    <property type="entry name" value="SH3_3"/>
    <property type="match status" value="1"/>
</dbReference>
<dbReference type="SMART" id="SM00382">
    <property type="entry name" value="AAA"/>
    <property type="match status" value="1"/>
</dbReference>
<dbReference type="SUPFAM" id="SSF52540">
    <property type="entry name" value="P-loop containing nucleoside triphosphate hydrolases"/>
    <property type="match status" value="1"/>
</dbReference>
<dbReference type="PROSITE" id="PS00211">
    <property type="entry name" value="ABC_TRANSPORTER_1"/>
    <property type="match status" value="1"/>
</dbReference>
<dbReference type="PROSITE" id="PS50893">
    <property type="entry name" value="ABC_TRANSPORTER_2"/>
    <property type="match status" value="1"/>
</dbReference>
<dbReference type="PROSITE" id="PS51781">
    <property type="entry name" value="SH3B"/>
    <property type="match status" value="1"/>
</dbReference>
<dbReference type="PROSITE" id="PS51251">
    <property type="entry name" value="TAGH"/>
    <property type="match status" value="1"/>
</dbReference>
<comment type="function">
    <text evidence="1">Part of the ABC transporter complex TagGH involved in teichoic acids export. Responsible for energy coupling to the transport system.</text>
</comment>
<comment type="catalytic activity">
    <reaction evidence="1">
        <text>ATP + H2O + teichoic acidSide 1 = ADP + phosphate + teichoic acidSide 2.</text>
        <dbReference type="EC" id="7.5.2.4"/>
    </reaction>
</comment>
<comment type="subunit">
    <text evidence="1">The complex is composed of two ATP-binding proteins (TagH) and two transmembrane proteins (TagG).</text>
</comment>
<comment type="subcellular location">
    <subcellularLocation>
        <location evidence="1">Cell membrane</location>
        <topology evidence="1">Peripheral membrane protein</topology>
    </subcellularLocation>
</comment>
<comment type="similarity">
    <text evidence="1">Belongs to the ABC transporter superfamily. Teichoic acids exporter (TC 3.A.1.104.1) family.</text>
</comment>
<reference key="1">
    <citation type="journal article" date="2006" name="J. Bacteriol.">
        <title>Pathogenomic sequence analysis of Bacillus cereus and Bacillus thuringiensis isolates closely related to Bacillus anthracis.</title>
        <authorList>
            <person name="Han C.S."/>
            <person name="Xie G."/>
            <person name="Challacombe J.F."/>
            <person name="Altherr M.R."/>
            <person name="Bhotika S.S."/>
            <person name="Bruce D."/>
            <person name="Campbell C.S."/>
            <person name="Campbell M.L."/>
            <person name="Chen J."/>
            <person name="Chertkov O."/>
            <person name="Cleland C."/>
            <person name="Dimitrijevic M."/>
            <person name="Doggett N.A."/>
            <person name="Fawcett J.J."/>
            <person name="Glavina T."/>
            <person name="Goodwin L.A."/>
            <person name="Hill K.K."/>
            <person name="Hitchcock P."/>
            <person name="Jackson P.J."/>
            <person name="Keim P."/>
            <person name="Kewalramani A.R."/>
            <person name="Longmire J."/>
            <person name="Lucas S."/>
            <person name="Malfatti S."/>
            <person name="McMurry K."/>
            <person name="Meincke L.J."/>
            <person name="Misra M."/>
            <person name="Moseman B.L."/>
            <person name="Mundt M."/>
            <person name="Munk A.C."/>
            <person name="Okinaka R.T."/>
            <person name="Parson-Quintana B."/>
            <person name="Reilly L.P."/>
            <person name="Richardson P."/>
            <person name="Robinson D.L."/>
            <person name="Rubin E."/>
            <person name="Saunders E."/>
            <person name="Tapia R."/>
            <person name="Tesmer J.G."/>
            <person name="Thayer N."/>
            <person name="Thompson L.S."/>
            <person name="Tice H."/>
            <person name="Ticknor L.O."/>
            <person name="Wills P.L."/>
            <person name="Brettin T.S."/>
            <person name="Gilna P."/>
        </authorList>
    </citation>
    <scope>NUCLEOTIDE SEQUENCE [LARGE SCALE GENOMIC DNA]</scope>
    <source>
        <strain>ZK / E33L</strain>
    </source>
</reference>
<gene>
    <name evidence="1" type="primary">tagH</name>
    <name type="ordered locus">BCE33L4965</name>
</gene>
<name>TAGH_BACCZ</name>
<organism>
    <name type="scientific">Bacillus cereus (strain ZK / E33L)</name>
    <dbReference type="NCBI Taxonomy" id="288681"/>
    <lineage>
        <taxon>Bacteria</taxon>
        <taxon>Bacillati</taxon>
        <taxon>Bacillota</taxon>
        <taxon>Bacilli</taxon>
        <taxon>Bacillales</taxon>
        <taxon>Bacillaceae</taxon>
        <taxon>Bacillus</taxon>
        <taxon>Bacillus cereus group</taxon>
    </lineage>
</organism>